<accession>B2IAA4</accession>
<gene>
    <name evidence="1" type="primary">opgD</name>
    <name type="ordered locus">XfasM23_2144</name>
</gene>
<organism>
    <name type="scientific">Xylella fastidiosa (strain M23)</name>
    <dbReference type="NCBI Taxonomy" id="405441"/>
    <lineage>
        <taxon>Bacteria</taxon>
        <taxon>Pseudomonadati</taxon>
        <taxon>Pseudomonadota</taxon>
        <taxon>Gammaproteobacteria</taxon>
        <taxon>Lysobacterales</taxon>
        <taxon>Lysobacteraceae</taxon>
        <taxon>Xylella</taxon>
    </lineage>
</organism>
<reference key="1">
    <citation type="journal article" date="2010" name="J. Bacteriol.">
        <title>Whole genome sequences of two Xylella fastidiosa strains (M12 and M23) causing almond leaf scorch disease in California.</title>
        <authorList>
            <person name="Chen J."/>
            <person name="Xie G."/>
            <person name="Han S."/>
            <person name="Chertkov O."/>
            <person name="Sims D."/>
            <person name="Civerolo E.L."/>
        </authorList>
    </citation>
    <scope>NUCLEOTIDE SEQUENCE [LARGE SCALE GENOMIC DNA]</scope>
    <source>
        <strain>M23</strain>
    </source>
</reference>
<name>OPGD_XYLF2</name>
<keyword id="KW-0574">Periplasm</keyword>
<keyword id="KW-0732">Signal</keyword>
<sequence length="534" mass="61348">MYRRDFLKSVTAAWVAFGLPNPLGGAFATNRVIPLRRLGQSQRFDYEWLKERARALAATPYHSRKRVLPTPLERLSWDQYQSIRYRQDHALWADSDAHFQVKFFHLGLYFHSPVRMYEVVDGMAQELAYDPAAFDYGSSGLNGKGLPKDLGFAGFRLNTRKDIDRDFAAFLGASYFRAVGQEGQYGQSARGLAVNTGSSGPEEFPDFIAYYLEQPTADADTVVMYGLLDSPSIAGAYRFSITHADVLRMDIDSALYPRETIERLGIAPCTSMYQVGENDRRMGWDWRPEIHDTDGLFLWTGNGEWIWRPLCNPLHLRFNMFLDNNPRGFGLLQRDRDFDHYQDDGVFYEKRPCLWVEPKHGWGEGSVQLVEIPTFDETFDNIVAFWNPRNKPHPGQELLFGYRLYWGAFPPVSSSLAYCVATRTGLGGVVGQKRKYFSWRFAVDFVGGKLAALARVHDVSVEPVLHMTRGRPEIVSARPLHEIRGYRVMFDVVPLEDSAQQIDIRLYLRDTNGEPLTETWLYQWVPPILEERKY</sequence>
<evidence type="ECO:0000255" key="1">
    <source>
        <dbReference type="HAMAP-Rule" id="MF_01068"/>
    </source>
</evidence>
<dbReference type="EMBL" id="CP001011">
    <property type="protein sequence ID" value="ACB93540.1"/>
    <property type="molecule type" value="Genomic_DNA"/>
</dbReference>
<dbReference type="RefSeq" id="WP_004087424.1">
    <property type="nucleotide sequence ID" value="NC_010577.1"/>
</dbReference>
<dbReference type="SMR" id="B2IAA4"/>
<dbReference type="KEGG" id="xfn:XfasM23_2144"/>
<dbReference type="HOGENOM" id="CLU_023403_2_0_6"/>
<dbReference type="UniPathway" id="UPA00637"/>
<dbReference type="Proteomes" id="UP000001698">
    <property type="component" value="Chromosome"/>
</dbReference>
<dbReference type="GO" id="GO:0030288">
    <property type="term" value="C:outer membrane-bounded periplasmic space"/>
    <property type="evidence" value="ECO:0007669"/>
    <property type="project" value="TreeGrafter"/>
</dbReference>
<dbReference type="GO" id="GO:0030246">
    <property type="term" value="F:carbohydrate binding"/>
    <property type="evidence" value="ECO:0007669"/>
    <property type="project" value="InterPro"/>
</dbReference>
<dbReference type="GO" id="GO:0003824">
    <property type="term" value="F:catalytic activity"/>
    <property type="evidence" value="ECO:0007669"/>
    <property type="project" value="InterPro"/>
</dbReference>
<dbReference type="GO" id="GO:0051274">
    <property type="term" value="P:beta-glucan biosynthetic process"/>
    <property type="evidence" value="ECO:0007669"/>
    <property type="project" value="TreeGrafter"/>
</dbReference>
<dbReference type="FunFam" id="2.70.98.10:FF:000001">
    <property type="entry name" value="Glucans biosynthesis protein G"/>
    <property type="match status" value="1"/>
</dbReference>
<dbReference type="Gene3D" id="2.70.98.10">
    <property type="match status" value="1"/>
</dbReference>
<dbReference type="Gene3D" id="2.60.40.10">
    <property type="entry name" value="Immunoglobulins"/>
    <property type="match status" value="1"/>
</dbReference>
<dbReference type="HAMAP" id="MF_01068">
    <property type="entry name" value="MdoD_OpgD"/>
    <property type="match status" value="1"/>
</dbReference>
<dbReference type="InterPro" id="IPR011013">
    <property type="entry name" value="Gal_mutarotase_sf_dom"/>
</dbReference>
<dbReference type="InterPro" id="IPR014718">
    <property type="entry name" value="GH-type_carb-bd"/>
</dbReference>
<dbReference type="InterPro" id="IPR023724">
    <property type="entry name" value="Glucan_biosyn_MdoD"/>
</dbReference>
<dbReference type="InterPro" id="IPR014438">
    <property type="entry name" value="Glucan_biosyn_MdoG/MdoD"/>
</dbReference>
<dbReference type="InterPro" id="IPR007444">
    <property type="entry name" value="Glucan_biosyn_MdoG_C"/>
</dbReference>
<dbReference type="InterPro" id="IPR013783">
    <property type="entry name" value="Ig-like_fold"/>
</dbReference>
<dbReference type="InterPro" id="IPR014756">
    <property type="entry name" value="Ig_E-set"/>
</dbReference>
<dbReference type="PANTHER" id="PTHR30504">
    <property type="entry name" value="GLUCANS BIOSYNTHESIS PROTEIN"/>
    <property type="match status" value="1"/>
</dbReference>
<dbReference type="PANTHER" id="PTHR30504:SF3">
    <property type="entry name" value="GLUCANS BIOSYNTHESIS PROTEIN D"/>
    <property type="match status" value="1"/>
</dbReference>
<dbReference type="Pfam" id="PF04349">
    <property type="entry name" value="MdoG"/>
    <property type="match status" value="1"/>
</dbReference>
<dbReference type="PIRSF" id="PIRSF006281">
    <property type="entry name" value="MdoG"/>
    <property type="match status" value="1"/>
</dbReference>
<dbReference type="SUPFAM" id="SSF81296">
    <property type="entry name" value="E set domains"/>
    <property type="match status" value="1"/>
</dbReference>
<dbReference type="SUPFAM" id="SSF74650">
    <property type="entry name" value="Galactose mutarotase-like"/>
    <property type="match status" value="1"/>
</dbReference>
<comment type="function">
    <text evidence="1">Probably involved in the control of the structural glucose backbone of osmoregulated periplasmic glucans (OPGs).</text>
</comment>
<comment type="pathway">
    <text evidence="1">Glycan metabolism; osmoregulated periplasmic glucan (OPG) biosynthesis.</text>
</comment>
<comment type="subcellular location">
    <subcellularLocation>
        <location evidence="1">Periplasm</location>
    </subcellularLocation>
</comment>
<comment type="PTM">
    <text>Predicted to be exported by the Tat system. The position of the signal peptide cleavage has not been experimentally proven.</text>
</comment>
<comment type="similarity">
    <text evidence="1">Belongs to the OpgD/OpgG family.</text>
</comment>
<proteinExistence type="inferred from homology"/>
<protein>
    <recommendedName>
        <fullName evidence="1">Glucans biosynthesis protein D</fullName>
    </recommendedName>
</protein>
<feature type="signal peptide" description="Tat-type signal" evidence="1">
    <location>
        <begin position="1"/>
        <end position="28"/>
    </location>
</feature>
<feature type="chain" id="PRO_1000213470" description="Glucans biosynthesis protein D">
    <location>
        <begin position="29"/>
        <end position="534"/>
    </location>
</feature>